<gene>
    <name evidence="1" type="primary">ispF</name>
    <name type="ordered locus">CLL_A0353</name>
</gene>
<feature type="chain" id="PRO_1000094253" description="2-C-methyl-D-erythritol 2,4-cyclodiphosphate synthase">
    <location>
        <begin position="1"/>
        <end position="157"/>
    </location>
</feature>
<feature type="binding site" evidence="1">
    <location>
        <begin position="8"/>
        <end position="10"/>
    </location>
    <ligand>
        <name>4-CDP-2-C-methyl-D-erythritol 2-phosphate</name>
        <dbReference type="ChEBI" id="CHEBI:57919"/>
    </ligand>
</feature>
<feature type="binding site" evidence="1">
    <location>
        <position position="8"/>
    </location>
    <ligand>
        <name>a divalent metal cation</name>
        <dbReference type="ChEBI" id="CHEBI:60240"/>
    </ligand>
</feature>
<feature type="binding site" evidence="1">
    <location>
        <position position="10"/>
    </location>
    <ligand>
        <name>a divalent metal cation</name>
        <dbReference type="ChEBI" id="CHEBI:60240"/>
    </ligand>
</feature>
<feature type="binding site" evidence="1">
    <location>
        <begin position="34"/>
        <end position="35"/>
    </location>
    <ligand>
        <name>4-CDP-2-C-methyl-D-erythritol 2-phosphate</name>
        <dbReference type="ChEBI" id="CHEBI:57919"/>
    </ligand>
</feature>
<feature type="binding site" evidence="1">
    <location>
        <position position="42"/>
    </location>
    <ligand>
        <name>a divalent metal cation</name>
        <dbReference type="ChEBI" id="CHEBI:60240"/>
    </ligand>
</feature>
<feature type="binding site" evidence="1">
    <location>
        <begin position="56"/>
        <end position="58"/>
    </location>
    <ligand>
        <name>4-CDP-2-C-methyl-D-erythritol 2-phosphate</name>
        <dbReference type="ChEBI" id="CHEBI:57919"/>
    </ligand>
</feature>
<feature type="binding site" evidence="1">
    <location>
        <begin position="61"/>
        <end position="65"/>
    </location>
    <ligand>
        <name>4-CDP-2-C-methyl-D-erythritol 2-phosphate</name>
        <dbReference type="ChEBI" id="CHEBI:57919"/>
    </ligand>
</feature>
<feature type="binding site" evidence="1">
    <location>
        <begin position="132"/>
        <end position="135"/>
    </location>
    <ligand>
        <name>4-CDP-2-C-methyl-D-erythritol 2-phosphate</name>
        <dbReference type="ChEBI" id="CHEBI:57919"/>
    </ligand>
</feature>
<feature type="binding site" evidence="1">
    <location>
        <position position="139"/>
    </location>
    <ligand>
        <name>4-CDP-2-C-methyl-D-erythritol 2-phosphate</name>
        <dbReference type="ChEBI" id="CHEBI:57919"/>
    </ligand>
</feature>
<feature type="site" description="Transition state stabilizer" evidence="1">
    <location>
        <position position="34"/>
    </location>
</feature>
<feature type="site" description="Transition state stabilizer" evidence="1">
    <location>
        <position position="133"/>
    </location>
</feature>
<dbReference type="EC" id="4.6.1.12" evidence="1"/>
<dbReference type="EMBL" id="CP001056">
    <property type="protein sequence ID" value="ACD24338.1"/>
    <property type="molecule type" value="Genomic_DNA"/>
</dbReference>
<dbReference type="SMR" id="B2TIU0"/>
<dbReference type="KEGG" id="cbk:CLL_A0353"/>
<dbReference type="PATRIC" id="fig|935198.13.peg.329"/>
<dbReference type="HOGENOM" id="CLU_084630_2_0_9"/>
<dbReference type="UniPathway" id="UPA00056">
    <property type="reaction ID" value="UER00095"/>
</dbReference>
<dbReference type="Proteomes" id="UP000001195">
    <property type="component" value="Chromosome"/>
</dbReference>
<dbReference type="GO" id="GO:0008685">
    <property type="term" value="F:2-C-methyl-D-erythritol 2,4-cyclodiphosphate synthase activity"/>
    <property type="evidence" value="ECO:0007669"/>
    <property type="project" value="UniProtKB-UniRule"/>
</dbReference>
<dbReference type="GO" id="GO:0046872">
    <property type="term" value="F:metal ion binding"/>
    <property type="evidence" value="ECO:0007669"/>
    <property type="project" value="UniProtKB-KW"/>
</dbReference>
<dbReference type="GO" id="GO:0019288">
    <property type="term" value="P:isopentenyl diphosphate biosynthetic process, methylerythritol 4-phosphate pathway"/>
    <property type="evidence" value="ECO:0007669"/>
    <property type="project" value="UniProtKB-UniRule"/>
</dbReference>
<dbReference type="GO" id="GO:0016114">
    <property type="term" value="P:terpenoid biosynthetic process"/>
    <property type="evidence" value="ECO:0007669"/>
    <property type="project" value="InterPro"/>
</dbReference>
<dbReference type="CDD" id="cd00554">
    <property type="entry name" value="MECDP_synthase"/>
    <property type="match status" value="1"/>
</dbReference>
<dbReference type="FunFam" id="3.30.1330.50:FF:000001">
    <property type="entry name" value="2-C-methyl-D-erythritol 2,4-cyclodiphosphate synthase"/>
    <property type="match status" value="1"/>
</dbReference>
<dbReference type="Gene3D" id="3.30.1330.50">
    <property type="entry name" value="2-C-methyl-D-erythritol 2,4-cyclodiphosphate synthase"/>
    <property type="match status" value="1"/>
</dbReference>
<dbReference type="HAMAP" id="MF_00107">
    <property type="entry name" value="IspF"/>
    <property type="match status" value="1"/>
</dbReference>
<dbReference type="InterPro" id="IPR003526">
    <property type="entry name" value="MECDP_synthase"/>
</dbReference>
<dbReference type="InterPro" id="IPR020555">
    <property type="entry name" value="MECDP_synthase_CS"/>
</dbReference>
<dbReference type="InterPro" id="IPR036571">
    <property type="entry name" value="MECDP_synthase_sf"/>
</dbReference>
<dbReference type="NCBIfam" id="TIGR00151">
    <property type="entry name" value="ispF"/>
    <property type="match status" value="1"/>
</dbReference>
<dbReference type="PANTHER" id="PTHR43181">
    <property type="entry name" value="2-C-METHYL-D-ERYTHRITOL 2,4-CYCLODIPHOSPHATE SYNTHASE, CHLOROPLASTIC"/>
    <property type="match status" value="1"/>
</dbReference>
<dbReference type="PANTHER" id="PTHR43181:SF1">
    <property type="entry name" value="2-C-METHYL-D-ERYTHRITOL 2,4-CYCLODIPHOSPHATE SYNTHASE, CHLOROPLASTIC"/>
    <property type="match status" value="1"/>
</dbReference>
<dbReference type="Pfam" id="PF02542">
    <property type="entry name" value="YgbB"/>
    <property type="match status" value="1"/>
</dbReference>
<dbReference type="SUPFAM" id="SSF69765">
    <property type="entry name" value="IpsF-like"/>
    <property type="match status" value="1"/>
</dbReference>
<dbReference type="PROSITE" id="PS01350">
    <property type="entry name" value="ISPF"/>
    <property type="match status" value="1"/>
</dbReference>
<accession>B2TIU0</accession>
<keyword id="KW-0414">Isoprene biosynthesis</keyword>
<keyword id="KW-0456">Lyase</keyword>
<keyword id="KW-0479">Metal-binding</keyword>
<proteinExistence type="inferred from homology"/>
<evidence type="ECO:0000255" key="1">
    <source>
        <dbReference type="HAMAP-Rule" id="MF_00107"/>
    </source>
</evidence>
<comment type="function">
    <text evidence="1">Involved in the biosynthesis of isopentenyl diphosphate (IPP) and dimethylallyl diphosphate (DMAPP), two major building blocks of isoprenoid compounds. Catalyzes the conversion of 4-diphosphocytidyl-2-C-methyl-D-erythritol 2-phosphate (CDP-ME2P) to 2-C-methyl-D-erythritol 2,4-cyclodiphosphate (ME-CPP) with a corresponding release of cytidine 5-monophosphate (CMP).</text>
</comment>
<comment type="catalytic activity">
    <reaction evidence="1">
        <text>4-CDP-2-C-methyl-D-erythritol 2-phosphate = 2-C-methyl-D-erythritol 2,4-cyclic diphosphate + CMP</text>
        <dbReference type="Rhea" id="RHEA:23864"/>
        <dbReference type="ChEBI" id="CHEBI:57919"/>
        <dbReference type="ChEBI" id="CHEBI:58483"/>
        <dbReference type="ChEBI" id="CHEBI:60377"/>
        <dbReference type="EC" id="4.6.1.12"/>
    </reaction>
</comment>
<comment type="cofactor">
    <cofactor evidence="1">
        <name>a divalent metal cation</name>
        <dbReference type="ChEBI" id="CHEBI:60240"/>
    </cofactor>
    <text evidence="1">Binds 1 divalent metal cation per subunit.</text>
</comment>
<comment type="pathway">
    <text evidence="1">Isoprenoid biosynthesis; isopentenyl diphosphate biosynthesis via DXP pathway; isopentenyl diphosphate from 1-deoxy-D-xylulose 5-phosphate: step 4/6.</text>
</comment>
<comment type="subunit">
    <text evidence="1">Homotrimer.</text>
</comment>
<comment type="similarity">
    <text evidence="1">Belongs to the IspF family.</text>
</comment>
<name>ISPF_CLOBB</name>
<reference key="1">
    <citation type="submission" date="2008-04" db="EMBL/GenBank/DDBJ databases">
        <title>Complete sequence of Clostridium botulinum strain Eklund.</title>
        <authorList>
            <person name="Brinkac L.M."/>
            <person name="Brown J.L."/>
            <person name="Bruce D."/>
            <person name="Detter C."/>
            <person name="Munk C."/>
            <person name="Smith L.A."/>
            <person name="Smith T.J."/>
            <person name="Sutton G."/>
            <person name="Brettin T.S."/>
        </authorList>
    </citation>
    <scope>NUCLEOTIDE SEQUENCE [LARGE SCALE GENOMIC DNA]</scope>
    <source>
        <strain>Eklund 17B / Type B</strain>
    </source>
</reference>
<organism>
    <name type="scientific">Clostridium botulinum (strain Eklund 17B / Type B)</name>
    <dbReference type="NCBI Taxonomy" id="935198"/>
    <lineage>
        <taxon>Bacteria</taxon>
        <taxon>Bacillati</taxon>
        <taxon>Bacillota</taxon>
        <taxon>Clostridia</taxon>
        <taxon>Eubacteriales</taxon>
        <taxon>Clostridiaceae</taxon>
        <taxon>Clostridium</taxon>
    </lineage>
</organism>
<sequence length="157" mass="17130">MRVGLGYDVHKLVENRKLILGGVEIPYEKGLLGHSDADVLLHAIMDSLLGACALGDIGRHFPDTDNKFKGISSIKLLEEVNKLIIKNRYIINNIDSVIIAQKPKLAPYIDTMTENISNALNIKIDQINIKATTEEGLGFTGGMLGISSQSICSVIKK</sequence>
<protein>
    <recommendedName>
        <fullName evidence="1">2-C-methyl-D-erythritol 2,4-cyclodiphosphate synthase</fullName>
        <shortName evidence="1">MECDP-synthase</shortName>
        <shortName evidence="1">MECPP-synthase</shortName>
        <shortName evidence="1">MECPS</shortName>
        <ecNumber evidence="1">4.6.1.12</ecNumber>
    </recommendedName>
</protein>